<name>ORN_BURP6</name>
<keyword id="KW-0963">Cytoplasm</keyword>
<keyword id="KW-0269">Exonuclease</keyword>
<keyword id="KW-0378">Hydrolase</keyword>
<keyword id="KW-0540">Nuclease</keyword>
<sequence>MTDISAVAGQPALVRNELNLVWLDMEMTGLDPDTDRIIEIAVVVTNSTLDIAVEGPVLAIHQSDETLAKMDDWNKNTHGRSGLIDRVRASSVTEADAAAQIAAFLAEHVPPGKSPMCGNSICQDRRFMARWMPELERFFHYRNLDVSTLKELCRRWQPAIYKGFQKRAMHTALADIHESIDELKYYRERFLIPAAPAGETA</sequence>
<evidence type="ECO:0000255" key="1">
    <source>
        <dbReference type="HAMAP-Rule" id="MF_00045"/>
    </source>
</evidence>
<proteinExistence type="inferred from homology"/>
<protein>
    <recommendedName>
        <fullName evidence="1">Oligoribonuclease</fullName>
        <ecNumber evidence="1">3.1.15.-</ecNumber>
    </recommendedName>
</protein>
<accession>A3NBZ6</accession>
<dbReference type="EC" id="3.1.15.-" evidence="1"/>
<dbReference type="EMBL" id="CP000570">
    <property type="protein sequence ID" value="ABN84736.1"/>
    <property type="molecule type" value="Genomic_DNA"/>
</dbReference>
<dbReference type="RefSeq" id="WP_004189767.1">
    <property type="nucleotide sequence ID" value="NC_009074.1"/>
</dbReference>
<dbReference type="SMR" id="A3NBZ6"/>
<dbReference type="GeneID" id="92978164"/>
<dbReference type="KEGG" id="bpd:BURPS668_2848"/>
<dbReference type="HOGENOM" id="CLU_064761_2_0_4"/>
<dbReference type="GO" id="GO:0005737">
    <property type="term" value="C:cytoplasm"/>
    <property type="evidence" value="ECO:0007669"/>
    <property type="project" value="UniProtKB-SubCell"/>
</dbReference>
<dbReference type="GO" id="GO:0000175">
    <property type="term" value="F:3'-5'-RNA exonuclease activity"/>
    <property type="evidence" value="ECO:0007669"/>
    <property type="project" value="InterPro"/>
</dbReference>
<dbReference type="GO" id="GO:0003676">
    <property type="term" value="F:nucleic acid binding"/>
    <property type="evidence" value="ECO:0007669"/>
    <property type="project" value="InterPro"/>
</dbReference>
<dbReference type="GO" id="GO:0006259">
    <property type="term" value="P:DNA metabolic process"/>
    <property type="evidence" value="ECO:0007669"/>
    <property type="project" value="UniProtKB-ARBA"/>
</dbReference>
<dbReference type="CDD" id="cd06135">
    <property type="entry name" value="Orn"/>
    <property type="match status" value="1"/>
</dbReference>
<dbReference type="FunFam" id="3.30.420.10:FF:000003">
    <property type="entry name" value="Oligoribonuclease"/>
    <property type="match status" value="1"/>
</dbReference>
<dbReference type="Gene3D" id="3.30.420.10">
    <property type="entry name" value="Ribonuclease H-like superfamily/Ribonuclease H"/>
    <property type="match status" value="1"/>
</dbReference>
<dbReference type="HAMAP" id="MF_00045">
    <property type="entry name" value="Oligoribonuclease"/>
    <property type="match status" value="1"/>
</dbReference>
<dbReference type="InterPro" id="IPR013520">
    <property type="entry name" value="Exonuclease_RNaseT/DNA_pol3"/>
</dbReference>
<dbReference type="InterPro" id="IPR022894">
    <property type="entry name" value="Oligoribonuclease"/>
</dbReference>
<dbReference type="InterPro" id="IPR012337">
    <property type="entry name" value="RNaseH-like_sf"/>
</dbReference>
<dbReference type="InterPro" id="IPR036397">
    <property type="entry name" value="RNaseH_sf"/>
</dbReference>
<dbReference type="NCBIfam" id="NF003765">
    <property type="entry name" value="PRK05359.1"/>
    <property type="match status" value="1"/>
</dbReference>
<dbReference type="PANTHER" id="PTHR11046">
    <property type="entry name" value="OLIGORIBONUCLEASE, MITOCHONDRIAL"/>
    <property type="match status" value="1"/>
</dbReference>
<dbReference type="PANTHER" id="PTHR11046:SF0">
    <property type="entry name" value="OLIGORIBONUCLEASE, MITOCHONDRIAL"/>
    <property type="match status" value="1"/>
</dbReference>
<dbReference type="Pfam" id="PF00929">
    <property type="entry name" value="RNase_T"/>
    <property type="match status" value="1"/>
</dbReference>
<dbReference type="SMART" id="SM00479">
    <property type="entry name" value="EXOIII"/>
    <property type="match status" value="1"/>
</dbReference>
<dbReference type="SUPFAM" id="SSF53098">
    <property type="entry name" value="Ribonuclease H-like"/>
    <property type="match status" value="1"/>
</dbReference>
<reference key="1">
    <citation type="journal article" date="2010" name="Genome Biol. Evol.">
        <title>Continuing evolution of Burkholderia mallei through genome reduction and large-scale rearrangements.</title>
        <authorList>
            <person name="Losada L."/>
            <person name="Ronning C.M."/>
            <person name="DeShazer D."/>
            <person name="Woods D."/>
            <person name="Fedorova N."/>
            <person name="Kim H.S."/>
            <person name="Shabalina S.A."/>
            <person name="Pearson T.R."/>
            <person name="Brinkac L."/>
            <person name="Tan P."/>
            <person name="Nandi T."/>
            <person name="Crabtree J."/>
            <person name="Badger J."/>
            <person name="Beckstrom-Sternberg S."/>
            <person name="Saqib M."/>
            <person name="Schutzer S.E."/>
            <person name="Keim P."/>
            <person name="Nierman W.C."/>
        </authorList>
    </citation>
    <scope>NUCLEOTIDE SEQUENCE [LARGE SCALE GENOMIC DNA]</scope>
    <source>
        <strain>668</strain>
    </source>
</reference>
<feature type="chain" id="PRO_1000004239" description="Oligoribonuclease">
    <location>
        <begin position="1"/>
        <end position="201"/>
    </location>
</feature>
<feature type="domain" description="Exonuclease" evidence="1">
    <location>
        <begin position="20"/>
        <end position="183"/>
    </location>
</feature>
<feature type="active site" evidence="1">
    <location>
        <position position="141"/>
    </location>
</feature>
<organism>
    <name type="scientific">Burkholderia pseudomallei (strain 668)</name>
    <dbReference type="NCBI Taxonomy" id="320373"/>
    <lineage>
        <taxon>Bacteria</taxon>
        <taxon>Pseudomonadati</taxon>
        <taxon>Pseudomonadota</taxon>
        <taxon>Betaproteobacteria</taxon>
        <taxon>Burkholderiales</taxon>
        <taxon>Burkholderiaceae</taxon>
        <taxon>Burkholderia</taxon>
        <taxon>pseudomallei group</taxon>
    </lineage>
</organism>
<comment type="function">
    <text evidence="1">3'-to-5' exoribonuclease specific for small oligoribonucleotides.</text>
</comment>
<comment type="subcellular location">
    <subcellularLocation>
        <location evidence="1">Cytoplasm</location>
    </subcellularLocation>
</comment>
<comment type="similarity">
    <text evidence="1">Belongs to the oligoribonuclease family.</text>
</comment>
<gene>
    <name evidence="1" type="primary">orn</name>
    <name type="ordered locus">BURPS668_2848</name>
</gene>